<protein>
    <recommendedName>
        <fullName evidence="1">Probable manganese efflux pump MntP</fullName>
    </recommendedName>
</protein>
<accession>Q57NH7</accession>
<feature type="chain" id="PRO_0000155663" description="Probable manganese efflux pump MntP">
    <location>
        <begin position="1"/>
        <end position="188"/>
    </location>
</feature>
<feature type="transmembrane region" description="Helical" evidence="1">
    <location>
        <begin position="3"/>
        <end position="23"/>
    </location>
</feature>
<feature type="transmembrane region" description="Helical" evidence="1">
    <location>
        <begin position="41"/>
        <end position="61"/>
    </location>
</feature>
<feature type="transmembrane region" description="Helical" evidence="1">
    <location>
        <begin position="66"/>
        <end position="86"/>
    </location>
</feature>
<feature type="transmembrane region" description="Helical" evidence="1">
    <location>
        <begin position="106"/>
        <end position="128"/>
    </location>
</feature>
<feature type="transmembrane region" description="Helical" evidence="1">
    <location>
        <begin position="143"/>
        <end position="163"/>
    </location>
</feature>
<feature type="transmembrane region" description="Helical" evidence="1">
    <location>
        <begin position="168"/>
        <end position="188"/>
    </location>
</feature>
<keyword id="KW-0997">Cell inner membrane</keyword>
<keyword id="KW-1003">Cell membrane</keyword>
<keyword id="KW-0406">Ion transport</keyword>
<keyword id="KW-0464">Manganese</keyword>
<keyword id="KW-0472">Membrane</keyword>
<keyword id="KW-0812">Transmembrane</keyword>
<keyword id="KW-1133">Transmembrane helix</keyword>
<keyword id="KW-0813">Transport</keyword>
<evidence type="ECO:0000255" key="1">
    <source>
        <dbReference type="HAMAP-Rule" id="MF_01521"/>
    </source>
</evidence>
<evidence type="ECO:0000305" key="2"/>
<gene>
    <name evidence="1" type="primary">mntP</name>
    <name type="synonym">yebN</name>
    <name type="ordered locus">SCH_1828</name>
</gene>
<dbReference type="EMBL" id="AE017220">
    <property type="protein sequence ID" value="AAX65734.1"/>
    <property type="status" value="ALT_INIT"/>
    <property type="molecule type" value="Genomic_DNA"/>
</dbReference>
<dbReference type="RefSeq" id="WP_001518359.1">
    <property type="nucleotide sequence ID" value="NC_006905.1"/>
</dbReference>
<dbReference type="KEGG" id="sec:SCH_1828"/>
<dbReference type="HOGENOM" id="CLU_096410_0_0_6"/>
<dbReference type="Proteomes" id="UP000000538">
    <property type="component" value="Chromosome"/>
</dbReference>
<dbReference type="GO" id="GO:0005886">
    <property type="term" value="C:plasma membrane"/>
    <property type="evidence" value="ECO:0007669"/>
    <property type="project" value="UniProtKB-SubCell"/>
</dbReference>
<dbReference type="GO" id="GO:0005384">
    <property type="term" value="F:manganese ion transmembrane transporter activity"/>
    <property type="evidence" value="ECO:0007669"/>
    <property type="project" value="UniProtKB-UniRule"/>
</dbReference>
<dbReference type="HAMAP" id="MF_01521">
    <property type="entry name" value="MntP_pump"/>
    <property type="match status" value="1"/>
</dbReference>
<dbReference type="InterPro" id="IPR003810">
    <property type="entry name" value="Mntp/YtaF"/>
</dbReference>
<dbReference type="InterPro" id="IPR022929">
    <property type="entry name" value="Put_MntP"/>
</dbReference>
<dbReference type="NCBIfam" id="NF008546">
    <property type="entry name" value="PRK11469.1"/>
    <property type="match status" value="1"/>
</dbReference>
<dbReference type="PANTHER" id="PTHR35529">
    <property type="entry name" value="MANGANESE EFFLUX PUMP MNTP-RELATED"/>
    <property type="match status" value="1"/>
</dbReference>
<dbReference type="PANTHER" id="PTHR35529:SF1">
    <property type="entry name" value="MANGANESE EFFLUX PUMP MNTP-RELATED"/>
    <property type="match status" value="1"/>
</dbReference>
<dbReference type="Pfam" id="PF02659">
    <property type="entry name" value="Mntp"/>
    <property type="match status" value="1"/>
</dbReference>
<comment type="function">
    <text evidence="1">Probably functions as a manganese efflux pump.</text>
</comment>
<comment type="subcellular location">
    <subcellularLocation>
        <location evidence="1">Cell inner membrane</location>
        <topology evidence="1">Multi-pass membrane protein</topology>
    </subcellularLocation>
</comment>
<comment type="similarity">
    <text evidence="1">Belongs to the MntP (TC 9.B.29) family.</text>
</comment>
<comment type="sequence caution" evidence="2">
    <conflict type="erroneous initiation">
        <sequence resource="EMBL-CDS" id="AAX65734"/>
    </conflict>
</comment>
<reference key="1">
    <citation type="journal article" date="2005" name="Nucleic Acids Res.">
        <title>The genome sequence of Salmonella enterica serovar Choleraesuis, a highly invasive and resistant zoonotic pathogen.</title>
        <authorList>
            <person name="Chiu C.-H."/>
            <person name="Tang P."/>
            <person name="Chu C."/>
            <person name="Hu S."/>
            <person name="Bao Q."/>
            <person name="Yu J."/>
            <person name="Chou Y.-Y."/>
            <person name="Wang H.-S."/>
            <person name="Lee Y.-S."/>
        </authorList>
    </citation>
    <scope>NUCLEOTIDE SEQUENCE [LARGE SCALE GENOMIC DNA]</scope>
    <source>
        <strain>SC-B67</strain>
    </source>
</reference>
<proteinExistence type="inferred from homology"/>
<sequence>MHFTATVLLAFGMSMDAFAASIGKGATLHKPKFSEALRTGLIFGAVETLTPLIGWGLGILASKFVLEWNHWIAFVLLIFLGGRMIIEGIRGGSDEDETPLRRHSFWLLVTTAIATSLDAMAVGVGLAFLQVNIIATALAIGCATLIMSTLGMMIGRFIGPMLGKRAEILGGVVLIGIGVQILWTHFHG</sequence>
<name>MNTP_SALCH</name>
<organism>
    <name type="scientific">Salmonella choleraesuis (strain SC-B67)</name>
    <dbReference type="NCBI Taxonomy" id="321314"/>
    <lineage>
        <taxon>Bacteria</taxon>
        <taxon>Pseudomonadati</taxon>
        <taxon>Pseudomonadota</taxon>
        <taxon>Gammaproteobacteria</taxon>
        <taxon>Enterobacterales</taxon>
        <taxon>Enterobacteriaceae</taxon>
        <taxon>Salmonella</taxon>
    </lineage>
</organism>